<organism>
    <name type="scientific">Streptomyces coelicolor (strain ATCC BAA-471 / A3(2) / M145)</name>
    <dbReference type="NCBI Taxonomy" id="100226"/>
    <lineage>
        <taxon>Bacteria</taxon>
        <taxon>Bacillati</taxon>
        <taxon>Actinomycetota</taxon>
        <taxon>Actinomycetes</taxon>
        <taxon>Kitasatosporales</taxon>
        <taxon>Streptomycetaceae</taxon>
        <taxon>Streptomyces</taxon>
        <taxon>Streptomyces albidoflavus group</taxon>
    </lineage>
</organism>
<gene>
    <name evidence="7" type="ordered locus">SCO3480</name>
    <name evidence="7" type="ORF">SCE65.16c</name>
</gene>
<feature type="chain" id="PRO_0000458058" description="3,6-anhydro-alpha-L-galactonate cycloisomerase">
    <location>
        <begin position="1"/>
        <end position="361"/>
    </location>
</feature>
<feature type="active site" description="Proton acceptor" evidence="1">
    <location>
        <position position="166"/>
    </location>
</feature>
<feature type="active site" description="Proton donor/acceptor" evidence="1">
    <location>
        <position position="297"/>
    </location>
</feature>
<feature type="binding site" evidence="3 9">
    <location>
        <position position="195"/>
    </location>
    <ligand>
        <name>Mg(2+)</name>
        <dbReference type="ChEBI" id="CHEBI:18420"/>
    </ligand>
</feature>
<feature type="binding site" evidence="3 9">
    <location>
        <position position="221"/>
    </location>
    <ligand>
        <name>Mg(2+)</name>
        <dbReference type="ChEBI" id="CHEBI:18420"/>
    </ligand>
</feature>
<feature type="binding site" evidence="3 9">
    <location>
        <position position="247"/>
    </location>
    <ligand>
        <name>Mg(2+)</name>
        <dbReference type="ChEBI" id="CHEBI:18420"/>
    </ligand>
</feature>
<feature type="strand" evidence="10">
    <location>
        <begin position="2"/>
        <end position="19"/>
    </location>
</feature>
<feature type="turn" evidence="10">
    <location>
        <begin position="21"/>
        <end position="23"/>
    </location>
</feature>
<feature type="strand" evidence="10">
    <location>
        <begin position="26"/>
        <end position="38"/>
    </location>
</feature>
<feature type="strand" evidence="10">
    <location>
        <begin position="43"/>
        <end position="54"/>
    </location>
</feature>
<feature type="helix" evidence="10">
    <location>
        <begin position="55"/>
        <end position="64"/>
    </location>
</feature>
<feature type="helix" evidence="10">
    <location>
        <begin position="67"/>
        <end position="70"/>
    </location>
</feature>
<feature type="helix" evidence="10">
    <location>
        <begin position="78"/>
        <end position="88"/>
    </location>
</feature>
<feature type="turn" evidence="11">
    <location>
        <begin position="89"/>
        <end position="93"/>
    </location>
</feature>
<feature type="helix" evidence="10">
    <location>
        <begin position="97"/>
        <end position="116"/>
    </location>
</feature>
<feature type="helix" evidence="10">
    <location>
        <begin position="121"/>
        <end position="124"/>
    </location>
</feature>
<feature type="strand" evidence="10">
    <location>
        <begin position="130"/>
        <end position="137"/>
    </location>
</feature>
<feature type="helix" evidence="10">
    <location>
        <begin position="145"/>
        <end position="157"/>
    </location>
</feature>
<feature type="strand" evidence="10">
    <location>
        <begin position="163"/>
        <end position="166"/>
    </location>
</feature>
<feature type="helix" evidence="10">
    <location>
        <begin position="172"/>
        <end position="186"/>
    </location>
</feature>
<feature type="strand" evidence="10">
    <location>
        <begin position="192"/>
        <end position="195"/>
    </location>
</feature>
<feature type="helix" evidence="10">
    <location>
        <begin position="202"/>
        <end position="212"/>
    </location>
</feature>
<feature type="helix" evidence="10">
    <location>
        <begin position="213"/>
        <end position="215"/>
    </location>
</feature>
<feature type="strand" evidence="10">
    <location>
        <begin position="218"/>
        <end position="221"/>
    </location>
</feature>
<feature type="helix" evidence="10">
    <location>
        <begin position="229"/>
        <end position="239"/>
    </location>
</feature>
<feature type="strand" evidence="10">
    <location>
        <begin position="243"/>
        <end position="245"/>
    </location>
</feature>
<feature type="helix" evidence="10">
    <location>
        <begin position="252"/>
        <end position="261"/>
    </location>
</feature>
<feature type="strand" evidence="10">
    <location>
        <begin position="265"/>
        <end position="267"/>
    </location>
</feature>
<feature type="turn" evidence="10">
    <location>
        <begin position="271"/>
        <end position="275"/>
    </location>
</feature>
<feature type="helix" evidence="10">
    <location>
        <begin position="277"/>
        <end position="289"/>
    </location>
</feature>
<feature type="helix" evidence="10">
    <location>
        <begin position="300"/>
        <end position="307"/>
    </location>
</feature>
<feature type="helix" evidence="10">
    <location>
        <begin position="324"/>
        <end position="326"/>
    </location>
</feature>
<feature type="strand" evidence="10">
    <location>
        <begin position="327"/>
        <end position="329"/>
    </location>
</feature>
<feature type="strand" evidence="10">
    <location>
        <begin position="337"/>
        <end position="339"/>
    </location>
</feature>
<feature type="strand" evidence="10">
    <location>
        <begin position="343"/>
        <end position="345"/>
    </location>
</feature>
<feature type="helix" evidence="10">
    <location>
        <begin position="352"/>
        <end position="356"/>
    </location>
</feature>
<sequence>MIERVRTDLYRIPLPTRLTDSTHGAMMDFELITVRIEDSDGATGLGYTYTVNHGGAAVATMVDKDLRGCLLGADAEQIEKIWQSMWWRLHYAGRGGHATSAISAVDIALWDLKGIRARTPLWKLFGGYDPVVPVYAGGIDLELPVADLKTQADRFLAGGFRAIKMKVGRPDLKEDVDRVSALREHLGDSFPLMVDANMKWTVDGAIRAARALAPFDLHWIEEPTIPDDLVGNARIVRESGHTIAGGENLHTLYDFHNAVRAGSLTLPEPDVSNIGGYTTFRKVAALAEANNMLLTSHGVHDLTVHALASVPHRTYMEAHGFGLHAYMAEPMAVTDGCVSAPDRPGHGVVLDFERLGRLAVG</sequence>
<keyword id="KW-0002">3D-structure</keyword>
<keyword id="KW-0119">Carbohydrate metabolism</keyword>
<keyword id="KW-0413">Isomerase</keyword>
<keyword id="KW-0460">Magnesium</keyword>
<keyword id="KW-0479">Metal-binding</keyword>
<keyword id="KW-1185">Reference proteome</keyword>
<comment type="function">
    <text evidence="2">Involved in the degradation of 3,6-anhydro-L-galactose, which is the major monomeric sugar of red macroalgae (PubMed:33820885). Catalyzes the isomerization of 3,6-anhydrogalactonate (AHGA) to 2-keto-3-deoxy-galactonate (KDGal) (PubMed:33820885).</text>
</comment>
<comment type="catalytic activity">
    <reaction evidence="2">
        <text>3,6-anhydro-L-galactonate = 2-dehydro-3-deoxy-L-galactonate</text>
        <dbReference type="Rhea" id="RHEA:21512"/>
        <dbReference type="ChEBI" id="CHEBI:75545"/>
        <dbReference type="ChEBI" id="CHEBI:83435"/>
        <dbReference type="EC" id="5.5.1.25"/>
    </reaction>
    <physiologicalReaction direction="left-to-right" evidence="2">
        <dbReference type="Rhea" id="RHEA:21513"/>
    </physiologicalReaction>
</comment>
<comment type="cofactor">
    <cofactor evidence="1">
        <name>Mg(2+)</name>
        <dbReference type="ChEBI" id="CHEBI:18420"/>
    </cofactor>
</comment>
<comment type="biotechnology">
    <text evidence="6">The AHG metabolic pathway may provide a useful platform for the efficient production of industrial chemicals and biofuels from red macroalgal biomass.</text>
</comment>
<comment type="similarity">
    <text evidence="5">Belongs to the mandelate racemase/muconate lactonizing enzyme family.</text>
</comment>
<name>ACI_STRCO</name>
<dbReference type="EC" id="5.5.1.25" evidence="2"/>
<dbReference type="EMBL" id="AL939116">
    <property type="protein sequence ID" value="CAB61804.1"/>
    <property type="molecule type" value="Genomic_DNA"/>
</dbReference>
<dbReference type="RefSeq" id="NP_627683.1">
    <property type="nucleotide sequence ID" value="NC_003888.3"/>
</dbReference>
<dbReference type="RefSeq" id="WP_011029019.1">
    <property type="nucleotide sequence ID" value="NZ_VNID01000041.1"/>
</dbReference>
<dbReference type="PDB" id="2OVL">
    <property type="method" value="X-ray"/>
    <property type="resolution" value="2.13 A"/>
    <property type="chains" value="A/B/C/D=2-361"/>
</dbReference>
<dbReference type="PDB" id="3CK5">
    <property type="method" value="X-ray"/>
    <property type="resolution" value="2.30 A"/>
    <property type="chains" value="A/B/C/D=2-361"/>
</dbReference>
<dbReference type="PDBsum" id="2OVL"/>
<dbReference type="PDBsum" id="3CK5"/>
<dbReference type="SMR" id="Q9RKF7"/>
<dbReference type="STRING" id="100226.gene:17761102"/>
<dbReference type="PaxDb" id="100226-SCO3480"/>
<dbReference type="DNASU" id="1098917"/>
<dbReference type="KEGG" id="sco:SCO3480"/>
<dbReference type="PATRIC" id="fig|100226.15.peg.3539"/>
<dbReference type="eggNOG" id="COG4948">
    <property type="taxonomic scope" value="Bacteria"/>
</dbReference>
<dbReference type="HOGENOM" id="CLU_030273_3_1_11"/>
<dbReference type="InParanoid" id="Q9RKF7"/>
<dbReference type="OrthoDB" id="9796450at2"/>
<dbReference type="PhylomeDB" id="Q9RKF7"/>
<dbReference type="EvolutionaryTrace" id="Q9RKF7"/>
<dbReference type="Proteomes" id="UP000001973">
    <property type="component" value="Chromosome"/>
</dbReference>
<dbReference type="GO" id="GO:0016836">
    <property type="term" value="F:hydro-lyase activity"/>
    <property type="evidence" value="ECO:0000318"/>
    <property type="project" value="GO_Central"/>
</dbReference>
<dbReference type="GO" id="GO:0016853">
    <property type="term" value="F:isomerase activity"/>
    <property type="evidence" value="ECO:0007669"/>
    <property type="project" value="UniProtKB-KW"/>
</dbReference>
<dbReference type="GO" id="GO:0000287">
    <property type="term" value="F:magnesium ion binding"/>
    <property type="evidence" value="ECO:0000318"/>
    <property type="project" value="GO_Central"/>
</dbReference>
<dbReference type="GO" id="GO:0009063">
    <property type="term" value="P:amino acid catabolic process"/>
    <property type="evidence" value="ECO:0007669"/>
    <property type="project" value="InterPro"/>
</dbReference>
<dbReference type="GO" id="GO:0016052">
    <property type="term" value="P:carbohydrate catabolic process"/>
    <property type="evidence" value="ECO:0000318"/>
    <property type="project" value="GO_Central"/>
</dbReference>
<dbReference type="GO" id="GO:0019388">
    <property type="term" value="P:galactose catabolic process"/>
    <property type="evidence" value="ECO:0007669"/>
    <property type="project" value="InterPro"/>
</dbReference>
<dbReference type="CDD" id="cd03316">
    <property type="entry name" value="MR_like"/>
    <property type="match status" value="1"/>
</dbReference>
<dbReference type="Gene3D" id="3.20.20.120">
    <property type="entry name" value="Enolase-like C-terminal domain"/>
    <property type="match status" value="1"/>
</dbReference>
<dbReference type="Gene3D" id="3.30.390.10">
    <property type="entry name" value="Enolase-like, N-terminal domain"/>
    <property type="match status" value="1"/>
</dbReference>
<dbReference type="InterPro" id="IPR034382">
    <property type="entry name" value="AHGA_cycloisomerase"/>
</dbReference>
<dbReference type="InterPro" id="IPR036849">
    <property type="entry name" value="Enolase-like_C_sf"/>
</dbReference>
<dbReference type="InterPro" id="IPR029017">
    <property type="entry name" value="Enolase-like_N"/>
</dbReference>
<dbReference type="InterPro" id="IPR029065">
    <property type="entry name" value="Enolase_C-like"/>
</dbReference>
<dbReference type="InterPro" id="IPR018110">
    <property type="entry name" value="Mandel_Rmase/mucon_lact_enz_CS"/>
</dbReference>
<dbReference type="InterPro" id="IPR013342">
    <property type="entry name" value="Mandelate_racemase_C"/>
</dbReference>
<dbReference type="InterPro" id="IPR013341">
    <property type="entry name" value="Mandelate_racemase_N_dom"/>
</dbReference>
<dbReference type="InterPro" id="IPR046945">
    <property type="entry name" value="RHMD-like"/>
</dbReference>
<dbReference type="PANTHER" id="PTHR13794">
    <property type="entry name" value="ENOLASE SUPERFAMILY, MANDELATE RACEMASE"/>
    <property type="match status" value="1"/>
</dbReference>
<dbReference type="PANTHER" id="PTHR13794:SF58">
    <property type="entry name" value="MITOCHONDRIAL ENOLASE SUPERFAMILY MEMBER 1"/>
    <property type="match status" value="1"/>
</dbReference>
<dbReference type="Pfam" id="PF13378">
    <property type="entry name" value="MR_MLE_C"/>
    <property type="match status" value="1"/>
</dbReference>
<dbReference type="Pfam" id="PF02746">
    <property type="entry name" value="MR_MLE_N"/>
    <property type="match status" value="1"/>
</dbReference>
<dbReference type="SFLD" id="SFLDF00557">
    <property type="entry name" value="3_6-anhydro-alpha-L-galactonat"/>
    <property type="match status" value="1"/>
</dbReference>
<dbReference type="SFLD" id="SFLDG00179">
    <property type="entry name" value="mandelate_racemase"/>
    <property type="match status" value="1"/>
</dbReference>
<dbReference type="SMART" id="SM00922">
    <property type="entry name" value="MR_MLE"/>
    <property type="match status" value="1"/>
</dbReference>
<dbReference type="SUPFAM" id="SSF51604">
    <property type="entry name" value="Enolase C-terminal domain-like"/>
    <property type="match status" value="1"/>
</dbReference>
<dbReference type="SUPFAM" id="SSF54826">
    <property type="entry name" value="Enolase N-terminal domain-like"/>
    <property type="match status" value="1"/>
</dbReference>
<dbReference type="PROSITE" id="PS00909">
    <property type="entry name" value="MR_MLE_2"/>
    <property type="match status" value="1"/>
</dbReference>
<proteinExistence type="evidence at protein level"/>
<protein>
    <recommendedName>
        <fullName evidence="4">3,6-anhydro-alpha-L-galactonate cycloisomerase</fullName>
        <shortName evidence="4">AHGA cycloisomerase</shortName>
        <ecNumber evidence="2">5.5.1.25</ecNumber>
    </recommendedName>
</protein>
<evidence type="ECO:0000250" key="1">
    <source>
        <dbReference type="UniProtKB" id="Q8ZL58"/>
    </source>
</evidence>
<evidence type="ECO:0000269" key="2">
    <source>
    </source>
</evidence>
<evidence type="ECO:0000269" key="3">
    <source ref="4"/>
</evidence>
<evidence type="ECO:0000303" key="4">
    <source>
    </source>
</evidence>
<evidence type="ECO:0000305" key="5"/>
<evidence type="ECO:0000305" key="6">
    <source>
    </source>
</evidence>
<evidence type="ECO:0000312" key="7">
    <source>
        <dbReference type="EMBL" id="CAB61804.1"/>
    </source>
</evidence>
<evidence type="ECO:0007744" key="8">
    <source>
        <dbReference type="PDB" id="2OVL"/>
    </source>
</evidence>
<evidence type="ECO:0007744" key="9">
    <source>
        <dbReference type="PDB" id="3CK5"/>
    </source>
</evidence>
<evidence type="ECO:0007829" key="10">
    <source>
        <dbReference type="PDB" id="2OVL"/>
    </source>
</evidence>
<evidence type="ECO:0007829" key="11">
    <source>
        <dbReference type="PDB" id="3CK5"/>
    </source>
</evidence>
<reference key="1">
    <citation type="journal article" date="2002" name="Nature">
        <title>Complete genome sequence of the model actinomycete Streptomyces coelicolor A3(2).</title>
        <authorList>
            <person name="Bentley S.D."/>
            <person name="Chater K.F."/>
            <person name="Cerdeno-Tarraga A.-M."/>
            <person name="Challis G.L."/>
            <person name="Thomson N.R."/>
            <person name="James K.D."/>
            <person name="Harris D.E."/>
            <person name="Quail M.A."/>
            <person name="Kieser H."/>
            <person name="Harper D."/>
            <person name="Bateman A."/>
            <person name="Brown S."/>
            <person name="Chandra G."/>
            <person name="Chen C.W."/>
            <person name="Collins M."/>
            <person name="Cronin A."/>
            <person name="Fraser A."/>
            <person name="Goble A."/>
            <person name="Hidalgo J."/>
            <person name="Hornsby T."/>
            <person name="Howarth S."/>
            <person name="Huang C.-H."/>
            <person name="Kieser T."/>
            <person name="Larke L."/>
            <person name="Murphy L.D."/>
            <person name="Oliver K."/>
            <person name="O'Neil S."/>
            <person name="Rabbinowitsch E."/>
            <person name="Rajandream M.A."/>
            <person name="Rutherford K.M."/>
            <person name="Rutter S."/>
            <person name="Seeger K."/>
            <person name="Saunders D."/>
            <person name="Sharp S."/>
            <person name="Squares R."/>
            <person name="Squares S."/>
            <person name="Taylor K."/>
            <person name="Warren T."/>
            <person name="Wietzorrek A."/>
            <person name="Woodward J.R."/>
            <person name="Barrell B.G."/>
            <person name="Parkhill J."/>
            <person name="Hopwood D.A."/>
        </authorList>
    </citation>
    <scope>NUCLEOTIDE SEQUENCE [LARGE SCALE GENOMIC DNA]</scope>
    <source>
        <strain>ATCC BAA-471 / A3(2) / M145</strain>
    </source>
</reference>
<reference key="2">
    <citation type="journal article" date="2021" name="J. Microbiol. Biotechnol.">
        <title>NADP+-Dependent Dehydrogenase SCO3486 and Cycloisomerase SCO3480: Key Enzymes for 3,6-Anhydro-L-Galactose Catabolism in Streptomyces coelicolor A3(2).</title>
        <authorList>
            <person name="Tsevelkhorloo M."/>
            <person name="Kim S.H."/>
            <person name="Kang D.K."/>
            <person name="Lee C.R."/>
            <person name="Hong S.K."/>
        </authorList>
    </citation>
    <scope>FUNCTION</scope>
    <scope>CATALYTIC ACTIVITY</scope>
    <scope>BIOTECHNOLOGY</scope>
    <source>
        <strain>ATCC BAA-471 / A3(2) / M145</strain>
    </source>
</reference>
<reference evidence="8" key="3">
    <citation type="submission" date="2007-02" db="PDB data bank">
        <title>Crystal structure of a racemase from Streptomyces coelicolor A3(2).</title>
        <authorList>
            <person name="Rao K.N."/>
            <person name="Burley S.K."/>
            <person name="Swaminathan S."/>
        </authorList>
    </citation>
    <scope>X-RAY CRYSTALLOGRAPHY (2.13 ANGSTROMS) OF 2-361</scope>
    <source>
        <strain>ATCC BAA-471 / A3(2) / M145</strain>
    </source>
</reference>
<reference evidence="9" key="4">
    <citation type="submission" date="2008-03" db="PDB data bank">
        <title>Crystal structure of a racemase from Streptomyces coelicolor A3(2) with bound magnesium.</title>
        <authorList>
            <person name="Rao K.N."/>
            <person name="Burley S.K."/>
            <person name="Swaminathan S."/>
        </authorList>
    </citation>
    <scope>X-RAY CRYSTALLOGRAPHY (2.30 ANGSTROMS) OF 2-361 IN COMPLEX WITH MAGNESIUM</scope>
    <source>
        <strain>ATCC BAA-471 / A3(2) / M145</strain>
    </source>
</reference>
<accession>Q9RKF7</accession>